<feature type="chain" id="PRO_1000056856" description="Nucleotide-binding protein Shew_3314">
    <location>
        <begin position="1"/>
        <end position="282"/>
    </location>
</feature>
<feature type="binding site" evidence="1">
    <location>
        <begin position="8"/>
        <end position="15"/>
    </location>
    <ligand>
        <name>ATP</name>
        <dbReference type="ChEBI" id="CHEBI:30616"/>
    </ligand>
</feature>
<feature type="binding site" evidence="1">
    <location>
        <begin position="56"/>
        <end position="59"/>
    </location>
    <ligand>
        <name>GTP</name>
        <dbReference type="ChEBI" id="CHEBI:37565"/>
    </ligand>
</feature>
<proteinExistence type="inferred from homology"/>
<gene>
    <name type="ordered locus">Shew_3314</name>
</gene>
<sequence length="282" mass="32462">MKLVLVSGRSGSGKSVALRVLEDLGYYCVDNLPLQMMESLLEQLKGRSDLVAISVDVRNMPSEEIQLEKQLAKLPKDTEILSFFLNSSDNVLLKRYSETRRLHPLSRSKVSLKEAIQLEGKLLDPIAKLVDHYIDTSNLNIYELSDKVREILLGTVDKELVINFESFGFKYGMPTEADFMFDVRFLPNPHWETELRPLTGLDEPVQQFLSQQPLVNKFIWQIENLLETWLPHLERNNRSYLTIAIGCTGGQHRSVYVTDQLAKLFNKGKHKVQARHRELKHD</sequence>
<reference key="1">
    <citation type="submission" date="2007-03" db="EMBL/GenBank/DDBJ databases">
        <title>Complete sequence of Shewanella loihica PV-4.</title>
        <authorList>
            <consortium name="US DOE Joint Genome Institute"/>
            <person name="Copeland A."/>
            <person name="Lucas S."/>
            <person name="Lapidus A."/>
            <person name="Barry K."/>
            <person name="Detter J.C."/>
            <person name="Glavina del Rio T."/>
            <person name="Hammon N."/>
            <person name="Israni S."/>
            <person name="Dalin E."/>
            <person name="Tice H."/>
            <person name="Pitluck S."/>
            <person name="Chain P."/>
            <person name="Malfatti S."/>
            <person name="Shin M."/>
            <person name="Vergez L."/>
            <person name="Schmutz J."/>
            <person name="Larimer F."/>
            <person name="Land M."/>
            <person name="Hauser L."/>
            <person name="Kyrpides N."/>
            <person name="Mikhailova N."/>
            <person name="Romine M.F."/>
            <person name="Serres G."/>
            <person name="Fredrickson J."/>
            <person name="Tiedje J."/>
            <person name="Richardson P."/>
        </authorList>
    </citation>
    <scope>NUCLEOTIDE SEQUENCE [LARGE SCALE GENOMIC DNA]</scope>
    <source>
        <strain>ATCC BAA-1088 / PV-4</strain>
    </source>
</reference>
<dbReference type="EMBL" id="CP000606">
    <property type="protein sequence ID" value="ABO25180.1"/>
    <property type="molecule type" value="Genomic_DNA"/>
</dbReference>
<dbReference type="RefSeq" id="WP_011867110.1">
    <property type="nucleotide sequence ID" value="NC_009092.1"/>
</dbReference>
<dbReference type="SMR" id="A3QI82"/>
<dbReference type="STRING" id="323850.Shew_3314"/>
<dbReference type="KEGG" id="slo:Shew_3314"/>
<dbReference type="eggNOG" id="COG1660">
    <property type="taxonomic scope" value="Bacteria"/>
</dbReference>
<dbReference type="HOGENOM" id="CLU_059558_1_1_6"/>
<dbReference type="OrthoDB" id="9784461at2"/>
<dbReference type="Proteomes" id="UP000001558">
    <property type="component" value="Chromosome"/>
</dbReference>
<dbReference type="GO" id="GO:0005524">
    <property type="term" value="F:ATP binding"/>
    <property type="evidence" value="ECO:0007669"/>
    <property type="project" value="UniProtKB-UniRule"/>
</dbReference>
<dbReference type="GO" id="GO:0005525">
    <property type="term" value="F:GTP binding"/>
    <property type="evidence" value="ECO:0007669"/>
    <property type="project" value="UniProtKB-UniRule"/>
</dbReference>
<dbReference type="HAMAP" id="MF_00636">
    <property type="entry name" value="RapZ_like"/>
    <property type="match status" value="1"/>
</dbReference>
<dbReference type="InterPro" id="IPR027417">
    <property type="entry name" value="P-loop_NTPase"/>
</dbReference>
<dbReference type="InterPro" id="IPR005337">
    <property type="entry name" value="RapZ-like"/>
</dbReference>
<dbReference type="InterPro" id="IPR053930">
    <property type="entry name" value="RapZ-like_N"/>
</dbReference>
<dbReference type="InterPro" id="IPR053931">
    <property type="entry name" value="RapZ_C"/>
</dbReference>
<dbReference type="NCBIfam" id="NF003828">
    <property type="entry name" value="PRK05416.1"/>
    <property type="match status" value="1"/>
</dbReference>
<dbReference type="PANTHER" id="PTHR30448">
    <property type="entry name" value="RNASE ADAPTER PROTEIN RAPZ"/>
    <property type="match status" value="1"/>
</dbReference>
<dbReference type="PANTHER" id="PTHR30448:SF0">
    <property type="entry name" value="RNASE ADAPTER PROTEIN RAPZ"/>
    <property type="match status" value="1"/>
</dbReference>
<dbReference type="Pfam" id="PF22740">
    <property type="entry name" value="PapZ_C"/>
    <property type="match status" value="1"/>
</dbReference>
<dbReference type="Pfam" id="PF03668">
    <property type="entry name" value="RapZ-like_N"/>
    <property type="match status" value="1"/>
</dbReference>
<dbReference type="PIRSF" id="PIRSF005052">
    <property type="entry name" value="P-loopkin"/>
    <property type="match status" value="1"/>
</dbReference>
<dbReference type="SUPFAM" id="SSF52540">
    <property type="entry name" value="P-loop containing nucleoside triphosphate hydrolases"/>
    <property type="match status" value="1"/>
</dbReference>
<comment type="function">
    <text evidence="1">Displays ATPase and GTPase activities.</text>
</comment>
<comment type="similarity">
    <text evidence="1">Belongs to the RapZ-like family.</text>
</comment>
<name>Y3314_SHELP</name>
<organism>
    <name type="scientific">Shewanella loihica (strain ATCC BAA-1088 / PV-4)</name>
    <dbReference type="NCBI Taxonomy" id="323850"/>
    <lineage>
        <taxon>Bacteria</taxon>
        <taxon>Pseudomonadati</taxon>
        <taxon>Pseudomonadota</taxon>
        <taxon>Gammaproteobacteria</taxon>
        <taxon>Alteromonadales</taxon>
        <taxon>Shewanellaceae</taxon>
        <taxon>Shewanella</taxon>
    </lineage>
</organism>
<keyword id="KW-0067">ATP-binding</keyword>
<keyword id="KW-0342">GTP-binding</keyword>
<keyword id="KW-0547">Nucleotide-binding</keyword>
<keyword id="KW-1185">Reference proteome</keyword>
<accession>A3QI82</accession>
<protein>
    <recommendedName>
        <fullName evidence="1">Nucleotide-binding protein Shew_3314</fullName>
    </recommendedName>
</protein>
<evidence type="ECO:0000255" key="1">
    <source>
        <dbReference type="HAMAP-Rule" id="MF_00636"/>
    </source>
</evidence>